<organism>
    <name type="scientific">Rattus norvegicus</name>
    <name type="common">Rat</name>
    <dbReference type="NCBI Taxonomy" id="10116"/>
    <lineage>
        <taxon>Eukaryota</taxon>
        <taxon>Metazoa</taxon>
        <taxon>Chordata</taxon>
        <taxon>Craniata</taxon>
        <taxon>Vertebrata</taxon>
        <taxon>Euteleostomi</taxon>
        <taxon>Mammalia</taxon>
        <taxon>Eutheria</taxon>
        <taxon>Euarchontoglires</taxon>
        <taxon>Glires</taxon>
        <taxon>Rodentia</taxon>
        <taxon>Myomorpha</taxon>
        <taxon>Muroidea</taxon>
        <taxon>Muridae</taxon>
        <taxon>Murinae</taxon>
        <taxon>Rattus</taxon>
    </lineage>
</organism>
<sequence length="366" mass="39614">MAGSAWVSKVSRLLGAFHNTKQVTRGFAGGVQTVTLIPGDGIGPEISASVMKIFDAAKAPIQWEERNVTAIQGPGGKWMIPPEAKESMDKNKMGLKGPLKTPIAAGHPSMNLLLRKTFDLYANVRPCVSIEGYKTPYTDVNIVTIRENTEGEYSGIEHVIVDGVVQSIKLITEGASKRIAEFAFEYARNNHRSNVTAVHKANIMRMSDGLFLQKCREVAENCKDIKFNEMYLDTVCLNMVQDPSQFDVLVMPNLYGDILSDLCAGLIGGLGVTQSGNIGANGVAIFESVHGTAPDIAGKDMANPTALLLSAVMMLRHMGLFDHAAKIEAACFATIKDGKSLTKDLGGNSKCSDFTEEICRRVKDLD</sequence>
<reference key="1">
    <citation type="journal article" date="2001" name="Biochem. Biophys. Res. Commun.">
        <title>Expression of NAD+-dependent isocitrate dehydrogenase in brown adipose tissue.</title>
        <authorList>
            <person name="Shinohara Y."/>
            <person name="Daikoku T."/>
            <person name="Kajimoto K."/>
            <person name="Shima A."/>
            <person name="Yamazaki N."/>
            <person name="Terada H."/>
        </authorList>
    </citation>
    <scope>NUCLEOTIDE SEQUENCE [MRNA]</scope>
    <scope>TISSUE SPECIFICITY</scope>
</reference>
<reference key="2">
    <citation type="submission" date="2007-04" db="UniProtKB">
        <authorList>
            <person name="Lubec G."/>
            <person name="Afjehi-Sadat L."/>
            <person name="Chen W.-Q."/>
        </authorList>
    </citation>
    <scope>PROTEIN SEQUENCE OF 67-77; 101-146; 179-188; 206-214; 327-336 AND 351-361</scope>
    <scope>IDENTIFICATION BY MASS SPECTROMETRY</scope>
    <source>
        <strain>Sprague-Dawley</strain>
        <tissue>Hippocampus</tissue>
        <tissue>Spinal cord</tissue>
    </source>
</reference>
<keyword id="KW-0007">Acetylation</keyword>
<keyword id="KW-0903">Direct protein sequencing</keyword>
<keyword id="KW-0460">Magnesium</keyword>
<keyword id="KW-0464">Manganese</keyword>
<keyword id="KW-0479">Metal-binding</keyword>
<keyword id="KW-0496">Mitochondrion</keyword>
<keyword id="KW-0520">NAD</keyword>
<keyword id="KW-0560">Oxidoreductase</keyword>
<keyword id="KW-0597">Phosphoprotein</keyword>
<keyword id="KW-1185">Reference proteome</keyword>
<keyword id="KW-0809">Transit peptide</keyword>
<keyword id="KW-0816">Tricarboxylic acid cycle</keyword>
<name>IDH3A_RAT</name>
<feature type="transit peptide" description="Mitochondrion" evidence="2">
    <location>
        <begin position="1"/>
        <end position="27"/>
    </location>
</feature>
<feature type="chain" id="PRO_0000014440" description="Isocitrate dehydrogenase [NAD] subunit alpha, mitochondrial">
    <location>
        <begin position="28"/>
        <end position="366"/>
    </location>
</feature>
<feature type="binding site" evidence="2">
    <location>
        <position position="115"/>
    </location>
    <ligand>
        <name>substrate</name>
    </ligand>
</feature>
<feature type="binding site" evidence="2">
    <location>
        <position position="125"/>
    </location>
    <ligand>
        <name>substrate</name>
    </ligand>
</feature>
<feature type="binding site" evidence="2">
    <location>
        <position position="146"/>
    </location>
    <ligand>
        <name>substrate</name>
    </ligand>
</feature>
<feature type="binding site" evidence="2">
    <location>
        <position position="233"/>
    </location>
    <ligand>
        <name>Mg(2+)</name>
        <dbReference type="ChEBI" id="CHEBI:18420"/>
    </ligand>
</feature>
<feature type="binding site" evidence="2">
    <location>
        <position position="257"/>
    </location>
    <ligand>
        <name>Mg(2+)</name>
        <dbReference type="ChEBI" id="CHEBI:18420"/>
    </ligand>
</feature>
<feature type="binding site" evidence="2">
    <location>
        <position position="261"/>
    </location>
    <ligand>
        <name>Mg(2+)</name>
        <dbReference type="ChEBI" id="CHEBI:18420"/>
    </ligand>
</feature>
<feature type="site" description="Critical for catalysis" evidence="2">
    <location>
        <position position="153"/>
    </location>
</feature>
<feature type="site" description="Critical for catalysis" evidence="2">
    <location>
        <position position="200"/>
    </location>
</feature>
<feature type="modified residue" description="N6-succinyllysine" evidence="3">
    <location>
        <position position="77"/>
    </location>
</feature>
<feature type="modified residue" description="Phosphothreonine" evidence="3">
    <location>
        <position position="101"/>
    </location>
</feature>
<feature type="modified residue" description="N6-acetyllysine" evidence="3">
    <location>
        <position position="223"/>
    </location>
</feature>
<feature type="modified residue" description="N6-acetyllysine; alternate" evidence="2">
    <location>
        <position position="343"/>
    </location>
</feature>
<feature type="modified residue" description="N6-succinyllysine; alternate" evidence="3">
    <location>
        <position position="343"/>
    </location>
</feature>
<feature type="modified residue" description="N6-succinyllysine" evidence="3">
    <location>
        <position position="350"/>
    </location>
</feature>
<accession>Q99NA5</accession>
<comment type="function">
    <text evidence="2">Catalytic subunit of the enzyme which catalyzes the decarboxylation of isocitrate (ICT) into alpha-ketoglutarate. The heterodimer composed of the alpha (IDH3A) and beta (IDH3B) subunits and the heterodimer composed of the alpha (IDH3A) and gamma (IDH3G) subunits, have considerable basal activity but the full activity of the heterotetramer (containing two subunits of IDH3A, one of IDH3B and one of IDH3G) requires the assembly and cooperative function of both heterodimers.</text>
</comment>
<comment type="catalytic activity">
    <reaction evidence="2">
        <text>D-threo-isocitrate + NAD(+) = 2-oxoglutarate + CO2 + NADH</text>
        <dbReference type="Rhea" id="RHEA:23632"/>
        <dbReference type="ChEBI" id="CHEBI:15562"/>
        <dbReference type="ChEBI" id="CHEBI:16526"/>
        <dbReference type="ChEBI" id="CHEBI:16810"/>
        <dbReference type="ChEBI" id="CHEBI:57540"/>
        <dbReference type="ChEBI" id="CHEBI:57945"/>
        <dbReference type="EC" id="1.1.1.41"/>
    </reaction>
    <physiologicalReaction direction="left-to-right" evidence="2">
        <dbReference type="Rhea" id="RHEA:23633"/>
    </physiologicalReaction>
</comment>
<comment type="cofactor">
    <cofactor evidence="2">
        <name>Mg(2+)</name>
        <dbReference type="ChEBI" id="CHEBI:18420"/>
    </cofactor>
    <cofactor evidence="2">
        <name>Mn(2+)</name>
        <dbReference type="ChEBI" id="CHEBI:29035"/>
    </cofactor>
    <text evidence="2">Divalent metal cations; Mn(2+) or Mg(2+). Activity higher in presence of Mn(2+) than of Mg(2+). Binds 1 Mg(2+) or Mn(2+) ion per subunit.</text>
</comment>
<comment type="activity regulation">
    <text evidence="2">The heterotetramer and the heterodimer composed of IDH3A and IDH3G subunits can be allosterically activated by citrate (CIT) or/and ADP, and the two activators can act independently or synergistically. The heterodimer composed of IDH3A and IDH3B subunits cannot be allosterically regulated and the allosteric regulation of the heterotetramer is through the IDH3G subunit and not the IDH3B subunit. The IDH3G subunit contains the allosteric site which consists of a CIT-binding site and an ADP-binding site, and the binding of CIT and ADP causes conformational changes at the allosteric site which are transmitted to the active site in the catalytic subunit (IDH3A) through a cascade of conformational changes at the heterodimer interface, leading to stabilization of the isocitrate-binding at the active site and thus activation of the enzyme. ATP can activate the heterotetramer and the heterodimer composed of IDH3A and IDH3G subunits at low concentrations but inhibits their activities at high concentrations, whereas ATP exhibits only inhibitory effect on the heterodimer composed of IDH3A and IDH3B subunits.</text>
</comment>
<comment type="subunit">
    <text evidence="2">Heterooligomer of subunits alpha (IDH3A), beta (IDH3B), and gamma (IDH3G) in the apparent ratio of 2:1:1. The heterodimer containing one IDH3A and one IDH3B subunit and the heterodimer containing one IDH3A and one IDH3G subunit assemble into a heterotetramer (which contains two subunits of IDH3A, one of IDH3B and one of IDH3G) and further into the heterooctamer.</text>
</comment>
<comment type="subcellular location">
    <subcellularLocation>
        <location evidence="1">Mitochondrion</location>
    </subcellularLocation>
</comment>
<comment type="tissue specificity">
    <text evidence="4">Expressed in brown adipose tissue (BAT).</text>
</comment>
<comment type="similarity">
    <text evidence="5">Belongs to the isocitrate and isopropylmalate dehydrogenases family.</text>
</comment>
<evidence type="ECO:0000250" key="1"/>
<evidence type="ECO:0000250" key="2">
    <source>
        <dbReference type="UniProtKB" id="P50213"/>
    </source>
</evidence>
<evidence type="ECO:0000250" key="3">
    <source>
        <dbReference type="UniProtKB" id="Q9D6R2"/>
    </source>
</evidence>
<evidence type="ECO:0000269" key="4">
    <source>
    </source>
</evidence>
<evidence type="ECO:0000305" key="5"/>
<evidence type="ECO:0000312" key="6">
    <source>
        <dbReference type="RGD" id="70889"/>
    </source>
</evidence>
<gene>
    <name evidence="6" type="primary">Idh3a</name>
</gene>
<proteinExistence type="evidence at protein level"/>
<protein>
    <recommendedName>
        <fullName evidence="2">Isocitrate dehydrogenase [NAD] subunit alpha, mitochondrial</fullName>
        <ecNumber evidence="2">1.1.1.41</ecNumber>
    </recommendedName>
    <alternativeName>
        <fullName>Isocitric dehydrogenase subunit alpha</fullName>
    </alternativeName>
    <alternativeName>
        <fullName>NAD(+)-specific ICDH subunit alpha</fullName>
    </alternativeName>
</protein>
<dbReference type="EC" id="1.1.1.41" evidence="2"/>
<dbReference type="EMBL" id="AB047541">
    <property type="protein sequence ID" value="BAB32675.1"/>
    <property type="molecule type" value="mRNA"/>
</dbReference>
<dbReference type="RefSeq" id="NP_446090.1">
    <property type="nucleotide sequence ID" value="NM_053638.1"/>
</dbReference>
<dbReference type="SMR" id="Q99NA5"/>
<dbReference type="BioGRID" id="250275">
    <property type="interactions" value="4"/>
</dbReference>
<dbReference type="ComplexPortal" id="CPX-557">
    <property type="entry name" value="Mitochondrial isocitrate dehydrogenase complex (NAD+)"/>
</dbReference>
<dbReference type="FunCoup" id="Q99NA5">
    <property type="interactions" value="2392"/>
</dbReference>
<dbReference type="IntAct" id="Q99NA5">
    <property type="interactions" value="4"/>
</dbReference>
<dbReference type="MINT" id="Q99NA5"/>
<dbReference type="STRING" id="10116.ENSRNOP00000015102"/>
<dbReference type="GlyGen" id="Q99NA5">
    <property type="glycosylation" value="1 site, 1 O-linked glycan (1 site)"/>
</dbReference>
<dbReference type="iPTMnet" id="Q99NA5"/>
<dbReference type="PhosphoSitePlus" id="Q99NA5"/>
<dbReference type="SwissPalm" id="Q99NA5"/>
<dbReference type="jPOST" id="Q99NA5"/>
<dbReference type="PaxDb" id="10116-ENSRNOP00000015102"/>
<dbReference type="GeneID" id="114096"/>
<dbReference type="KEGG" id="rno:114096"/>
<dbReference type="UCSC" id="RGD:70889">
    <property type="organism name" value="rat"/>
</dbReference>
<dbReference type="AGR" id="RGD:70889"/>
<dbReference type="CTD" id="3419"/>
<dbReference type="RGD" id="70889">
    <property type="gene designation" value="Idh3a"/>
</dbReference>
<dbReference type="eggNOG" id="KOG0785">
    <property type="taxonomic scope" value="Eukaryota"/>
</dbReference>
<dbReference type="InParanoid" id="Q99NA5"/>
<dbReference type="PhylomeDB" id="Q99NA5"/>
<dbReference type="BRENDA" id="1.1.1.41">
    <property type="organism ID" value="5301"/>
</dbReference>
<dbReference type="Reactome" id="R-RNO-71403">
    <property type="pathway name" value="Citric acid cycle (TCA cycle)"/>
</dbReference>
<dbReference type="Reactome" id="R-RNO-9837999">
    <property type="pathway name" value="Mitochondrial protein degradation"/>
</dbReference>
<dbReference type="SABIO-RK" id="Q99NA5"/>
<dbReference type="PRO" id="PR:Q99NA5"/>
<dbReference type="Proteomes" id="UP000002494">
    <property type="component" value="Unplaced"/>
</dbReference>
<dbReference type="GO" id="GO:0045242">
    <property type="term" value="C:isocitrate dehydrogenase complex (NAD+)"/>
    <property type="evidence" value="ECO:0000266"/>
    <property type="project" value="RGD"/>
</dbReference>
<dbReference type="GO" id="GO:0005739">
    <property type="term" value="C:mitochondrion"/>
    <property type="evidence" value="ECO:0000266"/>
    <property type="project" value="RGD"/>
</dbReference>
<dbReference type="GO" id="GO:0004449">
    <property type="term" value="F:isocitrate dehydrogenase (NAD+) activity"/>
    <property type="evidence" value="ECO:0000314"/>
    <property type="project" value="RGD"/>
</dbReference>
<dbReference type="GO" id="GO:0000287">
    <property type="term" value="F:magnesium ion binding"/>
    <property type="evidence" value="ECO:0000250"/>
    <property type="project" value="UniProtKB"/>
</dbReference>
<dbReference type="GO" id="GO:0051287">
    <property type="term" value="F:NAD binding"/>
    <property type="evidence" value="ECO:0007669"/>
    <property type="project" value="InterPro"/>
</dbReference>
<dbReference type="GO" id="GO:0006102">
    <property type="term" value="P:isocitrate metabolic process"/>
    <property type="evidence" value="ECO:0000318"/>
    <property type="project" value="GO_Central"/>
</dbReference>
<dbReference type="GO" id="GO:0006099">
    <property type="term" value="P:tricarboxylic acid cycle"/>
    <property type="evidence" value="ECO:0000266"/>
    <property type="project" value="RGD"/>
</dbReference>
<dbReference type="FunFam" id="3.40.718.10:FF:000003">
    <property type="entry name" value="Isocitrate dehydrogenase [NAD] subunit, mitochondrial"/>
    <property type="match status" value="1"/>
</dbReference>
<dbReference type="Gene3D" id="3.40.718.10">
    <property type="entry name" value="Isopropylmalate Dehydrogenase"/>
    <property type="match status" value="1"/>
</dbReference>
<dbReference type="InterPro" id="IPR019818">
    <property type="entry name" value="IsoCit/isopropylmalate_DH_CS"/>
</dbReference>
<dbReference type="InterPro" id="IPR004434">
    <property type="entry name" value="Isocitrate_DH_NAD"/>
</dbReference>
<dbReference type="InterPro" id="IPR024084">
    <property type="entry name" value="IsoPropMal-DH-like_dom"/>
</dbReference>
<dbReference type="NCBIfam" id="TIGR00175">
    <property type="entry name" value="mito_nad_idh"/>
    <property type="match status" value="1"/>
</dbReference>
<dbReference type="PANTHER" id="PTHR11835">
    <property type="entry name" value="DECARBOXYLATING DEHYDROGENASES-ISOCITRATE, ISOPROPYLMALATE, TARTRATE"/>
    <property type="match status" value="1"/>
</dbReference>
<dbReference type="PANTHER" id="PTHR11835:SF34">
    <property type="entry name" value="ISOCITRATE DEHYDROGENASE [NAD] SUBUNIT ALPHA, MITOCHONDRIAL"/>
    <property type="match status" value="1"/>
</dbReference>
<dbReference type="Pfam" id="PF00180">
    <property type="entry name" value="Iso_dh"/>
    <property type="match status" value="1"/>
</dbReference>
<dbReference type="SMART" id="SM01329">
    <property type="entry name" value="Iso_dh"/>
    <property type="match status" value="1"/>
</dbReference>
<dbReference type="SUPFAM" id="SSF53659">
    <property type="entry name" value="Isocitrate/Isopropylmalate dehydrogenase-like"/>
    <property type="match status" value="1"/>
</dbReference>
<dbReference type="PROSITE" id="PS00470">
    <property type="entry name" value="IDH_IMDH"/>
    <property type="match status" value="1"/>
</dbReference>